<dbReference type="EC" id="2.1.3.3" evidence="2"/>
<dbReference type="EMBL" id="AJ421514">
    <property type="protein sequence ID" value="CAD13392.1"/>
    <property type="molecule type" value="Genomic_DNA"/>
</dbReference>
<dbReference type="PDB" id="2W37">
    <property type="method" value="X-ray"/>
    <property type="resolution" value="2.10 A"/>
    <property type="chains" value="A/B/C=1-343"/>
</dbReference>
<dbReference type="PDBsum" id="2W37"/>
<dbReference type="SMR" id="Q8G998"/>
<dbReference type="BRENDA" id="2.1.3.3">
    <property type="organism ID" value="2871"/>
</dbReference>
<dbReference type="UniPathway" id="UPA00254">
    <property type="reaction ID" value="UER00365"/>
</dbReference>
<dbReference type="EvolutionaryTrace" id="Q8G998"/>
<dbReference type="GO" id="GO:0005737">
    <property type="term" value="C:cytoplasm"/>
    <property type="evidence" value="ECO:0007669"/>
    <property type="project" value="UniProtKB-SubCell"/>
</dbReference>
<dbReference type="GO" id="GO:0016597">
    <property type="term" value="F:amino acid binding"/>
    <property type="evidence" value="ECO:0007669"/>
    <property type="project" value="InterPro"/>
</dbReference>
<dbReference type="GO" id="GO:0046872">
    <property type="term" value="F:metal ion binding"/>
    <property type="evidence" value="ECO:0007669"/>
    <property type="project" value="UniProtKB-KW"/>
</dbReference>
<dbReference type="GO" id="GO:0004585">
    <property type="term" value="F:ornithine carbamoyltransferase activity"/>
    <property type="evidence" value="ECO:0007669"/>
    <property type="project" value="UniProtKB-UniRule"/>
</dbReference>
<dbReference type="GO" id="GO:0042450">
    <property type="term" value="P:arginine biosynthetic process via ornithine"/>
    <property type="evidence" value="ECO:0007669"/>
    <property type="project" value="TreeGrafter"/>
</dbReference>
<dbReference type="GO" id="GO:0019547">
    <property type="term" value="P:arginine catabolic process to ornithine"/>
    <property type="evidence" value="ECO:0007669"/>
    <property type="project" value="UniProtKB-UniPathway"/>
</dbReference>
<dbReference type="GO" id="GO:0019240">
    <property type="term" value="P:citrulline biosynthetic process"/>
    <property type="evidence" value="ECO:0007669"/>
    <property type="project" value="TreeGrafter"/>
</dbReference>
<dbReference type="FunFam" id="3.40.50.1370:FF:000008">
    <property type="entry name" value="Ornithine carbamoyltransferase"/>
    <property type="match status" value="1"/>
</dbReference>
<dbReference type="Gene3D" id="3.40.50.1370">
    <property type="entry name" value="Aspartate/ornithine carbamoyltransferase"/>
    <property type="match status" value="2"/>
</dbReference>
<dbReference type="HAMAP" id="MF_01109">
    <property type="entry name" value="OTCase"/>
    <property type="match status" value="1"/>
</dbReference>
<dbReference type="InterPro" id="IPR006132">
    <property type="entry name" value="Asp/Orn_carbamoyltranf_P-bd"/>
</dbReference>
<dbReference type="InterPro" id="IPR006130">
    <property type="entry name" value="Asp/Orn_carbamoylTrfase"/>
</dbReference>
<dbReference type="InterPro" id="IPR036901">
    <property type="entry name" value="Asp/Orn_carbamoylTrfase_sf"/>
</dbReference>
<dbReference type="InterPro" id="IPR006131">
    <property type="entry name" value="Asp_carbamoyltransf_Asp/Orn-bd"/>
</dbReference>
<dbReference type="InterPro" id="IPR002292">
    <property type="entry name" value="Orn/put_carbamltrans"/>
</dbReference>
<dbReference type="InterPro" id="IPR024904">
    <property type="entry name" value="OTCase_ArgI"/>
</dbReference>
<dbReference type="NCBIfam" id="TIGR00658">
    <property type="entry name" value="orni_carb_tr"/>
    <property type="match status" value="1"/>
</dbReference>
<dbReference type="PANTHER" id="PTHR45753:SF1">
    <property type="entry name" value="ORNITHINE CARBAMOYLTRANSFERASE, CATABOLIC"/>
    <property type="match status" value="1"/>
</dbReference>
<dbReference type="PANTHER" id="PTHR45753">
    <property type="entry name" value="ORNITHINE CARBAMOYLTRANSFERASE, MITOCHONDRIAL"/>
    <property type="match status" value="1"/>
</dbReference>
<dbReference type="Pfam" id="PF00185">
    <property type="entry name" value="OTCace"/>
    <property type="match status" value="1"/>
</dbReference>
<dbReference type="Pfam" id="PF02729">
    <property type="entry name" value="OTCace_N"/>
    <property type="match status" value="1"/>
</dbReference>
<dbReference type="PRINTS" id="PR00100">
    <property type="entry name" value="AOTCASE"/>
</dbReference>
<dbReference type="PRINTS" id="PR00102">
    <property type="entry name" value="OTCASE"/>
</dbReference>
<dbReference type="SUPFAM" id="SSF53671">
    <property type="entry name" value="Aspartate/ornithine carbamoyltransferase"/>
    <property type="match status" value="1"/>
</dbReference>
<dbReference type="PROSITE" id="PS00097">
    <property type="entry name" value="CARBAMOYLTRANSFERASE"/>
    <property type="match status" value="1"/>
</dbReference>
<accession>Q8G998</accession>
<gene>
    <name evidence="4" type="primary">arcB</name>
</gene>
<proteinExistence type="evidence at protein level"/>
<reference key="1">
    <citation type="journal article" date="2002" name="Gene">
        <title>The arginine deiminase pathway in the wine lactic acid bacterium Lactobacillus hilgardii X1B: structural and functional study of the arcABC genes.</title>
        <authorList>
            <person name="Arena M.E."/>
            <person name="Manca de Nadra M.C."/>
            <person name="Munoz R."/>
        </authorList>
    </citation>
    <scope>NUCLEOTIDE SEQUENCE [GENOMIC DNA]</scope>
    <source>
        <strain>X(1)B</strain>
    </source>
</reference>
<reference key="2">
    <citation type="journal article" date="2009" name="J. Mol. Biol.">
        <title>Crystal structure of the hexameric catabolic ornithine transcarbamylase from Lactobacillus hilgardii: Structural insights into the oligomeric assembly and metal binding.</title>
        <authorList>
            <person name="de Las Rivas B."/>
            <person name="Fox G.C."/>
            <person name="Angulo I."/>
            <person name="Ripoll M.M."/>
            <person name="Rodriguez H."/>
            <person name="Munoz R."/>
            <person name="Mancheno J.M."/>
        </authorList>
    </citation>
    <scope>X-RAY CRYSTALLOGRAPHY (2.1 ANGSTROMS) IN COMPLEX WITH NICKEL ION</scope>
    <scope>FUNCTION AS AN OTCASE</scope>
    <scope>MUTAGENESIS OF 337-ASN--VAL-343</scope>
    <scope>SUBUNIT</scope>
</reference>
<comment type="function">
    <text evidence="6">Involved in the catabolism of arginine. Catalyzes the phosphorolysis of citrulline, the reverse reaction of the biosynthetic one, yielding ornithine and carbamoyl phosphate which serve to generate ATP from ADP.</text>
</comment>
<comment type="catalytic activity">
    <reaction evidence="2">
        <text>carbamoyl phosphate + L-ornithine = L-citrulline + phosphate + H(+)</text>
        <dbReference type="Rhea" id="RHEA:19513"/>
        <dbReference type="ChEBI" id="CHEBI:15378"/>
        <dbReference type="ChEBI" id="CHEBI:43474"/>
        <dbReference type="ChEBI" id="CHEBI:46911"/>
        <dbReference type="ChEBI" id="CHEBI:57743"/>
        <dbReference type="ChEBI" id="CHEBI:58228"/>
        <dbReference type="EC" id="2.1.3.3"/>
    </reaction>
</comment>
<comment type="cofactor">
    <cofactor evidence="3">
        <name>Ni(2+)</name>
        <dbReference type="ChEBI" id="CHEBI:49786"/>
    </cofactor>
    <text evidence="3">Ni(2+) ion bind each monomer of the trimer.</text>
</comment>
<comment type="pathway">
    <text evidence="6">Amino-acid degradation; L-arginine degradation via ADI pathway; carbamoyl phosphate from L-arginine: step 2/2.</text>
</comment>
<comment type="subunit">
    <text evidence="3">Homohexamer; dimer of trimers.</text>
</comment>
<comment type="subcellular location">
    <subcellularLocation>
        <location evidence="2">Cytoplasm</location>
    </subcellularLocation>
</comment>
<comment type="miscellaneous">
    <text evidence="3">The C-terminal end of the protein is critical for the stabilization of this oligomer.</text>
</comment>
<comment type="similarity">
    <text evidence="2">Belongs to the aspartate/ornithine carbamoyltransferase superfamily. OTCase family.</text>
</comment>
<feature type="chain" id="PRO_0000112932" description="Ornithine carbamoyltransferase, catabolic">
    <location>
        <begin position="1"/>
        <end position="343"/>
    </location>
</feature>
<feature type="binding site" evidence="1">
    <location>
        <begin position="62"/>
        <end position="65"/>
    </location>
    <ligand>
        <name>carbamoyl phosphate</name>
        <dbReference type="ChEBI" id="CHEBI:58228"/>
    </ligand>
</feature>
<feature type="binding site" evidence="3">
    <location>
        <position position="79"/>
    </location>
    <ligand>
        <name>Ni(2+)</name>
        <dbReference type="ChEBI" id="CHEBI:49786"/>
    </ligand>
</feature>
<feature type="binding site" evidence="1">
    <location>
        <position position="89"/>
    </location>
    <ligand>
        <name>carbamoyl phosphate</name>
        <dbReference type="ChEBI" id="CHEBI:58228"/>
    </ligand>
</feature>
<feature type="binding site" evidence="1">
    <location>
        <position position="113"/>
    </location>
    <ligand>
        <name>carbamoyl phosphate</name>
        <dbReference type="ChEBI" id="CHEBI:58228"/>
    </ligand>
</feature>
<feature type="binding site" evidence="1">
    <location>
        <begin position="140"/>
        <end position="143"/>
    </location>
    <ligand>
        <name>carbamoyl phosphate</name>
        <dbReference type="ChEBI" id="CHEBI:58228"/>
    </ligand>
</feature>
<feature type="binding site" evidence="1">
    <location>
        <position position="172"/>
    </location>
    <ligand>
        <name>L-ornithine</name>
        <dbReference type="ChEBI" id="CHEBI:46911"/>
    </ligand>
</feature>
<feature type="binding site" evidence="1">
    <location>
        <position position="236"/>
    </location>
    <ligand>
        <name>L-ornithine</name>
        <dbReference type="ChEBI" id="CHEBI:46911"/>
    </ligand>
</feature>
<feature type="binding site" evidence="1">
    <location>
        <begin position="240"/>
        <end position="241"/>
    </location>
    <ligand>
        <name>L-ornithine</name>
        <dbReference type="ChEBI" id="CHEBI:46911"/>
    </ligand>
</feature>
<feature type="binding site" evidence="1">
    <location>
        <begin position="278"/>
        <end position="279"/>
    </location>
    <ligand>
        <name>carbamoyl phosphate</name>
        <dbReference type="ChEBI" id="CHEBI:58228"/>
    </ligand>
</feature>
<feature type="binding site" evidence="1">
    <location>
        <position position="323"/>
    </location>
    <ligand>
        <name>carbamoyl phosphate</name>
        <dbReference type="ChEBI" id="CHEBI:58228"/>
    </ligand>
</feature>
<feature type="mutagenesis site" description="It generates a metastable mutant that behaves as a mixture of monomeric and trimeric species with only the latter exhibiting OTC activity." evidence="3">
    <location>
        <begin position="337"/>
        <end position="343"/>
    </location>
</feature>
<feature type="turn" evidence="7">
    <location>
        <begin position="9"/>
        <end position="12"/>
    </location>
</feature>
<feature type="helix" evidence="7">
    <location>
        <begin position="18"/>
        <end position="20"/>
    </location>
</feature>
<feature type="helix" evidence="7">
    <location>
        <begin position="23"/>
        <end position="42"/>
    </location>
</feature>
<feature type="turn" evidence="7">
    <location>
        <begin position="48"/>
        <end position="51"/>
    </location>
</feature>
<feature type="strand" evidence="7">
    <location>
        <begin position="53"/>
        <end position="60"/>
    </location>
</feature>
<feature type="helix" evidence="7">
    <location>
        <begin position="63"/>
        <end position="75"/>
    </location>
</feature>
<feature type="strand" evidence="7">
    <location>
        <begin position="79"/>
        <end position="83"/>
    </location>
</feature>
<feature type="turn" evidence="7">
    <location>
        <begin position="85"/>
        <end position="87"/>
    </location>
</feature>
<feature type="turn" evidence="7">
    <location>
        <begin position="90"/>
        <end position="92"/>
    </location>
</feature>
<feature type="helix" evidence="7">
    <location>
        <begin position="96"/>
        <end position="106"/>
    </location>
</feature>
<feature type="strand" evidence="7">
    <location>
        <begin position="108"/>
        <end position="115"/>
    </location>
</feature>
<feature type="helix" evidence="7">
    <location>
        <begin position="117"/>
        <end position="126"/>
    </location>
</feature>
<feature type="strand" evidence="7">
    <location>
        <begin position="127"/>
        <end position="129"/>
    </location>
</feature>
<feature type="strand" evidence="7">
    <location>
        <begin position="131"/>
        <end position="135"/>
    </location>
</feature>
<feature type="helix" evidence="7">
    <location>
        <begin position="141"/>
        <end position="155"/>
    </location>
</feature>
<feature type="strand" evidence="7">
    <location>
        <begin position="162"/>
        <end position="167"/>
    </location>
</feature>
<feature type="helix" evidence="7">
    <location>
        <begin position="172"/>
        <end position="184"/>
    </location>
</feature>
<feature type="strand" evidence="7">
    <location>
        <begin position="187"/>
        <end position="191"/>
    </location>
</feature>
<feature type="helix" evidence="7">
    <location>
        <begin position="194"/>
        <end position="196"/>
    </location>
</feature>
<feature type="helix" evidence="7">
    <location>
        <begin position="200"/>
        <end position="213"/>
    </location>
</feature>
<feature type="strand" evidence="7">
    <location>
        <begin position="217"/>
        <end position="221"/>
    </location>
</feature>
<feature type="helix" evidence="7">
    <location>
        <begin position="223"/>
        <end position="227"/>
    </location>
</feature>
<feature type="strand" evidence="7">
    <location>
        <begin position="231"/>
        <end position="235"/>
    </location>
</feature>
<feature type="helix" evidence="7">
    <location>
        <begin position="246"/>
        <end position="253"/>
    </location>
</feature>
<feature type="helix" evidence="7">
    <location>
        <begin position="254"/>
        <end position="256"/>
    </location>
</feature>
<feature type="helix" evidence="7">
    <location>
        <begin position="260"/>
        <end position="264"/>
    </location>
</feature>
<feature type="helix" evidence="7">
    <location>
        <begin position="270"/>
        <end position="272"/>
    </location>
</feature>
<feature type="strand" evidence="7">
    <location>
        <begin position="274"/>
        <end position="277"/>
    </location>
</feature>
<feature type="helix" evidence="7">
    <location>
        <begin position="288"/>
        <end position="297"/>
    </location>
</feature>
<feature type="helix" evidence="7">
    <location>
        <begin position="306"/>
        <end position="309"/>
    </location>
</feature>
<feature type="helix" evidence="7">
    <location>
        <begin position="316"/>
        <end position="335"/>
    </location>
</feature>
<name>OTCC_LENHI</name>
<sequence>MTKDFRQNVFQGRSVLAEKDFSAAELEYLIDFGLHLKALKKAGIPHHYLEGKNIALLFEKSSTRTRSAFTTASIDLGAHPEYLGQNDIQLGKKESTSDTAKVLGSMFDGIEFRGFKQSDAEILARDSGVPVWNGLTDEWHPTQMLADFMTVKENFGKLQGLTLTFMGDGRNNVANSLLVTGAILGVNIHIVAPKALFPTEETQNIAKGFAEKSGAKLVITDDLDEGLKGSNVVYTDVWVSMGESNWEERVKELTPYQVNMEAMKKTGTPDDQLIFMHCLPAFHNTDTQYGKEIKEKYGITEMEVTDEVFTSKYARQFEEAENRMHSIKAMMAATLGNLFIPRV</sequence>
<evidence type="ECO:0000250" key="1">
    <source>
        <dbReference type="UniProtKB" id="P04391"/>
    </source>
</evidence>
<evidence type="ECO:0000255" key="2">
    <source>
        <dbReference type="HAMAP-Rule" id="MF_01109"/>
    </source>
</evidence>
<evidence type="ECO:0000269" key="3">
    <source>
    </source>
</evidence>
<evidence type="ECO:0000303" key="4">
    <source>
    </source>
</evidence>
<evidence type="ECO:0000303" key="5">
    <source>
    </source>
</evidence>
<evidence type="ECO:0000305" key="6">
    <source>
    </source>
</evidence>
<evidence type="ECO:0007829" key="7">
    <source>
        <dbReference type="PDB" id="2W37"/>
    </source>
</evidence>
<keyword id="KW-0002">3D-structure</keyword>
<keyword id="KW-0056">Arginine metabolism</keyword>
<keyword id="KW-0963">Cytoplasm</keyword>
<keyword id="KW-0479">Metal-binding</keyword>
<keyword id="KW-0533">Nickel</keyword>
<keyword id="KW-0808">Transferase</keyword>
<organism>
    <name type="scientific">Lentilactobacillus hilgardii</name>
    <name type="common">Lactobacillus hilgardii</name>
    <dbReference type="NCBI Taxonomy" id="1588"/>
    <lineage>
        <taxon>Bacteria</taxon>
        <taxon>Bacillati</taxon>
        <taxon>Bacillota</taxon>
        <taxon>Bacilli</taxon>
        <taxon>Lactobacillales</taxon>
        <taxon>Lactobacillaceae</taxon>
        <taxon>Lentilactobacillus</taxon>
    </lineage>
</organism>
<protein>
    <recommendedName>
        <fullName evidence="5">Ornithine carbamoyltransferase, catabolic</fullName>
        <shortName evidence="5">OTCase</shortName>
        <ecNumber evidence="2">2.1.3.3</ecNumber>
    </recommendedName>
</protein>